<accession>P54150</accession>
<accession>Q8LAX4</accession>
<accession>Q94A72</accession>
<accession>Q9SW13</accession>
<proteinExistence type="evidence at protein level"/>
<organism>
    <name type="scientific">Arabidopsis thaliana</name>
    <name type="common">Mouse-ear cress</name>
    <dbReference type="NCBI Taxonomy" id="3702"/>
    <lineage>
        <taxon>Eukaryota</taxon>
        <taxon>Viridiplantae</taxon>
        <taxon>Streptophyta</taxon>
        <taxon>Embryophyta</taxon>
        <taxon>Tracheophyta</taxon>
        <taxon>Spermatophyta</taxon>
        <taxon>Magnoliopsida</taxon>
        <taxon>eudicotyledons</taxon>
        <taxon>Gunneridae</taxon>
        <taxon>Pentapetalae</taxon>
        <taxon>rosids</taxon>
        <taxon>malvids</taxon>
        <taxon>Brassicales</taxon>
        <taxon>Brassicaceae</taxon>
        <taxon>Camelineae</taxon>
        <taxon>Arabidopsis</taxon>
    </lineage>
</organism>
<dbReference type="EC" id="1.8.4.11" evidence="3"/>
<dbReference type="EMBL" id="X97326">
    <property type="protein sequence ID" value="CAA65991.1"/>
    <property type="molecule type" value="Genomic_DNA"/>
</dbReference>
<dbReference type="EMBL" id="AL035523">
    <property type="protein sequence ID" value="CAB36755.1"/>
    <property type="molecule type" value="Genomic_DNA"/>
</dbReference>
<dbReference type="EMBL" id="AL161562">
    <property type="protein sequence ID" value="CAB79422.1"/>
    <property type="molecule type" value="Genomic_DNA"/>
</dbReference>
<dbReference type="EMBL" id="CP002687">
    <property type="protein sequence ID" value="AEE85015.1"/>
    <property type="molecule type" value="Genomic_DNA"/>
</dbReference>
<dbReference type="EMBL" id="AY049303">
    <property type="protein sequence ID" value="AAK83645.1"/>
    <property type="molecule type" value="mRNA"/>
</dbReference>
<dbReference type="EMBL" id="BT001033">
    <property type="protein sequence ID" value="AAN46787.1"/>
    <property type="molecule type" value="mRNA"/>
</dbReference>
<dbReference type="EMBL" id="AY087550">
    <property type="protein sequence ID" value="AAM65092.1"/>
    <property type="molecule type" value="mRNA"/>
</dbReference>
<dbReference type="PIR" id="T05534">
    <property type="entry name" value="T05534"/>
</dbReference>
<dbReference type="RefSeq" id="NP_194243.1">
    <property type="nucleotide sequence ID" value="NM_118645.4"/>
</dbReference>
<dbReference type="SMR" id="P54150"/>
<dbReference type="FunCoup" id="P54150">
    <property type="interactions" value="2663"/>
</dbReference>
<dbReference type="IntAct" id="P54150">
    <property type="interactions" value="1"/>
</dbReference>
<dbReference type="STRING" id="3702.P54150"/>
<dbReference type="iPTMnet" id="P54150"/>
<dbReference type="SwissPalm" id="P54150"/>
<dbReference type="PaxDb" id="3702-AT4G25130.1"/>
<dbReference type="ProteomicsDB" id="239011"/>
<dbReference type="EnsemblPlants" id="AT4G25130.1">
    <property type="protein sequence ID" value="AT4G25130.1"/>
    <property type="gene ID" value="AT4G25130"/>
</dbReference>
<dbReference type="GeneID" id="828616"/>
<dbReference type="Gramene" id="AT4G25130.1">
    <property type="protein sequence ID" value="AT4G25130.1"/>
    <property type="gene ID" value="AT4G25130"/>
</dbReference>
<dbReference type="KEGG" id="ath:AT4G25130"/>
<dbReference type="Araport" id="AT4G25130"/>
<dbReference type="TAIR" id="AT4G25130">
    <property type="gene designation" value="PMSR4"/>
</dbReference>
<dbReference type="eggNOG" id="KOG1635">
    <property type="taxonomic scope" value="Eukaryota"/>
</dbReference>
<dbReference type="HOGENOM" id="CLU_031040_3_1_1"/>
<dbReference type="InParanoid" id="P54150"/>
<dbReference type="OMA" id="STMHSEV"/>
<dbReference type="OrthoDB" id="77405at2759"/>
<dbReference type="PhylomeDB" id="P54150"/>
<dbReference type="BRENDA" id="1.8.4.11">
    <property type="organism ID" value="399"/>
</dbReference>
<dbReference type="PRO" id="PR:P54150"/>
<dbReference type="Proteomes" id="UP000006548">
    <property type="component" value="Chromosome 4"/>
</dbReference>
<dbReference type="ExpressionAtlas" id="P54150">
    <property type="expression patterns" value="baseline and differential"/>
</dbReference>
<dbReference type="GO" id="GO:0009507">
    <property type="term" value="C:chloroplast"/>
    <property type="evidence" value="ECO:0000314"/>
    <property type="project" value="TAIR"/>
</dbReference>
<dbReference type="GO" id="GO:0009941">
    <property type="term" value="C:chloroplast envelope"/>
    <property type="evidence" value="ECO:0007005"/>
    <property type="project" value="TAIR"/>
</dbReference>
<dbReference type="GO" id="GO:0009570">
    <property type="term" value="C:chloroplast stroma"/>
    <property type="evidence" value="ECO:0000314"/>
    <property type="project" value="UniProtKB"/>
</dbReference>
<dbReference type="GO" id="GO:0005829">
    <property type="term" value="C:cytosol"/>
    <property type="evidence" value="ECO:0007005"/>
    <property type="project" value="TAIR"/>
</dbReference>
<dbReference type="GO" id="GO:0005739">
    <property type="term" value="C:mitochondrion"/>
    <property type="evidence" value="ECO:0007005"/>
    <property type="project" value="TAIR"/>
</dbReference>
<dbReference type="GO" id="GO:0033744">
    <property type="term" value="F:L-methionine:thioredoxin-disulfide S-oxidoreductase activity"/>
    <property type="evidence" value="ECO:0007669"/>
    <property type="project" value="RHEA"/>
</dbReference>
<dbReference type="GO" id="GO:0008113">
    <property type="term" value="F:peptide-methionine (S)-S-oxide reductase activity"/>
    <property type="evidence" value="ECO:0000314"/>
    <property type="project" value="UniProtKB"/>
</dbReference>
<dbReference type="GO" id="GO:0034599">
    <property type="term" value="P:cellular response to oxidative stress"/>
    <property type="evidence" value="ECO:0000315"/>
    <property type="project" value="TAIR"/>
</dbReference>
<dbReference type="GO" id="GO:0009416">
    <property type="term" value="P:response to light stimulus"/>
    <property type="evidence" value="ECO:0000270"/>
    <property type="project" value="UniProtKB"/>
</dbReference>
<dbReference type="FunFam" id="3.30.1060.10:FF:000002">
    <property type="entry name" value="Peptide methionine sulfoxide reductase"/>
    <property type="match status" value="1"/>
</dbReference>
<dbReference type="Gene3D" id="3.30.1060.10">
    <property type="entry name" value="Peptide methionine sulphoxide reductase MsrA"/>
    <property type="match status" value="1"/>
</dbReference>
<dbReference type="HAMAP" id="MF_01401">
    <property type="entry name" value="MsrA"/>
    <property type="match status" value="1"/>
</dbReference>
<dbReference type="InterPro" id="IPR002569">
    <property type="entry name" value="Met_Sox_Rdtase_MsrA_dom"/>
</dbReference>
<dbReference type="InterPro" id="IPR036509">
    <property type="entry name" value="Met_Sox_Rdtase_MsrA_sf"/>
</dbReference>
<dbReference type="InterPro" id="IPR050162">
    <property type="entry name" value="MsrA_MetSO_reductase"/>
</dbReference>
<dbReference type="NCBIfam" id="TIGR00401">
    <property type="entry name" value="msrA"/>
    <property type="match status" value="1"/>
</dbReference>
<dbReference type="PANTHER" id="PTHR42799">
    <property type="entry name" value="MITOCHONDRIAL PEPTIDE METHIONINE SULFOXIDE REDUCTASE"/>
    <property type="match status" value="1"/>
</dbReference>
<dbReference type="PANTHER" id="PTHR42799:SF2">
    <property type="entry name" value="MITOCHONDRIAL PEPTIDE METHIONINE SULFOXIDE REDUCTASE"/>
    <property type="match status" value="1"/>
</dbReference>
<dbReference type="Pfam" id="PF01625">
    <property type="entry name" value="PMSR"/>
    <property type="match status" value="1"/>
</dbReference>
<dbReference type="SUPFAM" id="SSF55068">
    <property type="entry name" value="Peptide methionine sulfoxide reductase"/>
    <property type="match status" value="1"/>
</dbReference>
<keyword id="KW-0007">Acetylation</keyword>
<keyword id="KW-0150">Chloroplast</keyword>
<keyword id="KW-0560">Oxidoreductase</keyword>
<keyword id="KW-0597">Phosphoprotein</keyword>
<keyword id="KW-0934">Plastid</keyword>
<keyword id="KW-1185">Reference proteome</keyword>
<keyword id="KW-0809">Transit peptide</keyword>
<gene>
    <name type="primary">MSR4</name>
    <name type="synonym">PMSR</name>
    <name type="synonym">PMSR4</name>
    <name type="ordered locus">At4g25130</name>
    <name type="ORF">F13M23.270</name>
</gene>
<feature type="transit peptide" description="Chloroplast" evidence="6">
    <location>
        <begin position="1"/>
        <end position="53"/>
    </location>
</feature>
<feature type="chain" id="PRO_0000138632" description="Peptide methionine sulfoxide reductase A4, chloroplastic">
    <location>
        <begin position="54"/>
        <end position="258"/>
    </location>
</feature>
<feature type="region of interest" description="Disordered" evidence="2">
    <location>
        <begin position="62"/>
        <end position="89"/>
    </location>
</feature>
<feature type="modified residue" description="N-acetylmethionine" evidence="6">
    <location>
        <position position="54"/>
    </location>
</feature>
<feature type="modified residue" description="Phosphoserine" evidence="1">
    <location>
        <position position="245"/>
    </location>
</feature>
<feature type="sequence conflict" description="In Ref. 1; CAA65991." evidence="5" ref="1">
    <original>Y</original>
    <variation>S</variation>
    <location>
        <position position="131"/>
    </location>
</feature>
<feature type="sequence conflict" description="In Ref. 4; AAK83645/AAN46787." evidence="5" ref="4">
    <original>E</original>
    <variation>D</variation>
    <location>
        <position position="195"/>
    </location>
</feature>
<feature type="sequence conflict" description="In Ref. 5; AAM65092." evidence="5" ref="5">
    <original>R</original>
    <variation>K</variation>
    <location>
        <position position="212"/>
    </location>
</feature>
<feature type="sequence conflict" description="In Ref. 4; AAK83645/AAN46787." evidence="5" ref="4">
    <original>R</original>
    <variation>K</variation>
    <location>
        <position position="225"/>
    </location>
</feature>
<sequence length="258" mass="28644">MQVLVVSPPLIAAASLSKPLNSLSKAALSFSRAKPICPFPQTSRRPISVYKSPMNNLFNRLGFGSRPQAQADPSSAAIAQGPDDDVPSSGQQFAQFGAGCFWGVELAYQRVPGVTKTEVGYSHGIVHNPSYEDVCTGTTGHNEVVRVQYDPKECSFESLLDVFWNRHDPTTLNRQGGDVGTQYRSGIYYYTDEQERIAREAVEKQQKILNKRIVTEILPATKFYRAENYHQQYLAKGGRMGLRQSAEKGCKDPIRCYG</sequence>
<evidence type="ECO:0000250" key="1">
    <source>
        <dbReference type="UniProtKB" id="Q9LY15"/>
    </source>
</evidence>
<evidence type="ECO:0000256" key="2">
    <source>
        <dbReference type="SAM" id="MobiDB-lite"/>
    </source>
</evidence>
<evidence type="ECO:0000269" key="3">
    <source>
    </source>
</evidence>
<evidence type="ECO:0000269" key="4">
    <source>
    </source>
</evidence>
<evidence type="ECO:0000305" key="5"/>
<evidence type="ECO:0007744" key="6">
    <source>
    </source>
</evidence>
<protein>
    <recommendedName>
        <fullName>Peptide methionine sulfoxide reductase A4, chloroplastic</fullName>
        <shortName>AtMSRA4</shortName>
        <ecNumber evidence="3">1.8.4.11</ecNumber>
    </recommendedName>
    <alternativeName>
        <fullName>Peptide-methionine (S)-S-oxide reductase</fullName>
        <shortName>Peptide Met(O) reductase</shortName>
    </alternativeName>
    <alternativeName>
        <fullName>Protein-methionine-S-oxide reductase</fullName>
    </alternativeName>
</protein>
<comment type="function">
    <text evidence="3 4">Catalyzes the reduction of methionine sulfoxide (MetSO) to methionine in proteins. Plays a protective role against oxidative stress by restoring activity to proteins that have been inactivated by methionine oxidation. Prevents the methionine sulfoxidation of the heat shock protein HSP21 and its subsequent inactivation. MSRA family specifically reduces the MetSO S-enantiomer.</text>
</comment>
<comment type="catalytic activity">
    <reaction evidence="3">
        <text>L-methionyl-[protein] + [thioredoxin]-disulfide + H2O = L-methionyl-(S)-S-oxide-[protein] + [thioredoxin]-dithiol</text>
        <dbReference type="Rhea" id="RHEA:14217"/>
        <dbReference type="Rhea" id="RHEA-COMP:10698"/>
        <dbReference type="Rhea" id="RHEA-COMP:10700"/>
        <dbReference type="Rhea" id="RHEA-COMP:12313"/>
        <dbReference type="Rhea" id="RHEA-COMP:12315"/>
        <dbReference type="ChEBI" id="CHEBI:15377"/>
        <dbReference type="ChEBI" id="CHEBI:16044"/>
        <dbReference type="ChEBI" id="CHEBI:29950"/>
        <dbReference type="ChEBI" id="CHEBI:44120"/>
        <dbReference type="ChEBI" id="CHEBI:50058"/>
        <dbReference type="EC" id="1.8.4.11"/>
    </reaction>
</comment>
<comment type="catalytic activity">
    <reaction>
        <text>[thioredoxin]-disulfide + L-methionine + H2O = L-methionine (S)-S-oxide + [thioredoxin]-dithiol</text>
        <dbReference type="Rhea" id="RHEA:19993"/>
        <dbReference type="Rhea" id="RHEA-COMP:10698"/>
        <dbReference type="Rhea" id="RHEA-COMP:10700"/>
        <dbReference type="ChEBI" id="CHEBI:15377"/>
        <dbReference type="ChEBI" id="CHEBI:29950"/>
        <dbReference type="ChEBI" id="CHEBI:50058"/>
        <dbReference type="ChEBI" id="CHEBI:57844"/>
        <dbReference type="ChEBI" id="CHEBI:58772"/>
        <dbReference type="EC" id="1.8.4.11"/>
    </reaction>
</comment>
<comment type="biophysicochemical properties">
    <phDependence>
        <text evidence="3">Optimum pH is 8.0.</text>
    </phDependence>
</comment>
<comment type="subcellular location">
    <subcellularLocation>
        <location>Plastid</location>
        <location>Chloroplast stroma</location>
    </subcellularLocation>
</comment>
<comment type="tissue specificity">
    <text evidence="3">Expressed in rosette and cauline leaves, and at lower levels in stems and flowers (at protein level).</text>
</comment>
<comment type="induction">
    <text evidence="3">By light in etiolated seedlings (at protein level).</text>
</comment>
<comment type="similarity">
    <text evidence="5">Belongs to the MsrA Met sulfoxide reductase family.</text>
</comment>
<name>MSRA4_ARATH</name>
<reference key="1">
    <citation type="submission" date="1996-04" db="EMBL/GenBank/DDBJ databases">
        <authorList>
            <person name="Piffanelli P."/>
            <person name="Batchedler C."/>
            <person name="Murphy D.J."/>
        </authorList>
    </citation>
    <scope>NUCLEOTIDE SEQUENCE [GENOMIC DNA]</scope>
    <source>
        <strain>cv. Columbia</strain>
    </source>
</reference>
<reference key="2">
    <citation type="journal article" date="1999" name="Nature">
        <title>Sequence and analysis of chromosome 4 of the plant Arabidopsis thaliana.</title>
        <authorList>
            <person name="Mayer K.F.X."/>
            <person name="Schueller C."/>
            <person name="Wambutt R."/>
            <person name="Murphy G."/>
            <person name="Volckaert G."/>
            <person name="Pohl T."/>
            <person name="Duesterhoeft A."/>
            <person name="Stiekema W."/>
            <person name="Entian K.-D."/>
            <person name="Terryn N."/>
            <person name="Harris B."/>
            <person name="Ansorge W."/>
            <person name="Brandt P."/>
            <person name="Grivell L.A."/>
            <person name="Rieger M."/>
            <person name="Weichselgartner M."/>
            <person name="de Simone V."/>
            <person name="Obermaier B."/>
            <person name="Mache R."/>
            <person name="Mueller M."/>
            <person name="Kreis M."/>
            <person name="Delseny M."/>
            <person name="Puigdomenech P."/>
            <person name="Watson M."/>
            <person name="Schmidtheini T."/>
            <person name="Reichert B."/>
            <person name="Portetelle D."/>
            <person name="Perez-Alonso M."/>
            <person name="Boutry M."/>
            <person name="Bancroft I."/>
            <person name="Vos P."/>
            <person name="Hoheisel J."/>
            <person name="Zimmermann W."/>
            <person name="Wedler H."/>
            <person name="Ridley P."/>
            <person name="Langham S.-A."/>
            <person name="McCullagh B."/>
            <person name="Bilham L."/>
            <person name="Robben J."/>
            <person name="van der Schueren J."/>
            <person name="Grymonprez B."/>
            <person name="Chuang Y.-J."/>
            <person name="Vandenbussche F."/>
            <person name="Braeken M."/>
            <person name="Weltjens I."/>
            <person name="Voet M."/>
            <person name="Bastiaens I."/>
            <person name="Aert R."/>
            <person name="Defoor E."/>
            <person name="Weitzenegger T."/>
            <person name="Bothe G."/>
            <person name="Ramsperger U."/>
            <person name="Hilbert H."/>
            <person name="Braun M."/>
            <person name="Holzer E."/>
            <person name="Brandt A."/>
            <person name="Peters S."/>
            <person name="van Staveren M."/>
            <person name="Dirkse W."/>
            <person name="Mooijman P."/>
            <person name="Klein Lankhorst R."/>
            <person name="Rose M."/>
            <person name="Hauf J."/>
            <person name="Koetter P."/>
            <person name="Berneiser S."/>
            <person name="Hempel S."/>
            <person name="Feldpausch M."/>
            <person name="Lamberth S."/>
            <person name="Van den Daele H."/>
            <person name="De Keyser A."/>
            <person name="Buysshaert C."/>
            <person name="Gielen J."/>
            <person name="Villarroel R."/>
            <person name="De Clercq R."/>
            <person name="van Montagu M."/>
            <person name="Rogers J."/>
            <person name="Cronin A."/>
            <person name="Quail M.A."/>
            <person name="Bray-Allen S."/>
            <person name="Clark L."/>
            <person name="Doggett J."/>
            <person name="Hall S."/>
            <person name="Kay M."/>
            <person name="Lennard N."/>
            <person name="McLay K."/>
            <person name="Mayes R."/>
            <person name="Pettett A."/>
            <person name="Rajandream M.A."/>
            <person name="Lyne M."/>
            <person name="Benes V."/>
            <person name="Rechmann S."/>
            <person name="Borkova D."/>
            <person name="Bloecker H."/>
            <person name="Scharfe M."/>
            <person name="Grimm M."/>
            <person name="Loehnert T.-H."/>
            <person name="Dose S."/>
            <person name="de Haan M."/>
            <person name="Maarse A.C."/>
            <person name="Schaefer M."/>
            <person name="Mueller-Auer S."/>
            <person name="Gabel C."/>
            <person name="Fuchs M."/>
            <person name="Fartmann B."/>
            <person name="Granderath K."/>
            <person name="Dauner D."/>
            <person name="Herzl A."/>
            <person name="Neumann S."/>
            <person name="Argiriou A."/>
            <person name="Vitale D."/>
            <person name="Liguori R."/>
            <person name="Piravandi E."/>
            <person name="Massenet O."/>
            <person name="Quigley F."/>
            <person name="Clabauld G."/>
            <person name="Muendlein A."/>
            <person name="Felber R."/>
            <person name="Schnabl S."/>
            <person name="Hiller R."/>
            <person name="Schmidt W."/>
            <person name="Lecharny A."/>
            <person name="Aubourg S."/>
            <person name="Chefdor F."/>
            <person name="Cooke R."/>
            <person name="Berger C."/>
            <person name="Monfort A."/>
            <person name="Casacuberta E."/>
            <person name="Gibbons T."/>
            <person name="Weber N."/>
            <person name="Vandenbol M."/>
            <person name="Bargues M."/>
            <person name="Terol J."/>
            <person name="Torres A."/>
            <person name="Perez-Perez A."/>
            <person name="Purnelle B."/>
            <person name="Bent E."/>
            <person name="Johnson S."/>
            <person name="Tacon D."/>
            <person name="Jesse T."/>
            <person name="Heijnen L."/>
            <person name="Schwarz S."/>
            <person name="Scholler P."/>
            <person name="Heber S."/>
            <person name="Francs P."/>
            <person name="Bielke C."/>
            <person name="Frishman D."/>
            <person name="Haase D."/>
            <person name="Lemcke K."/>
            <person name="Mewes H.-W."/>
            <person name="Stocker S."/>
            <person name="Zaccaria P."/>
            <person name="Bevan M."/>
            <person name="Wilson R.K."/>
            <person name="de la Bastide M."/>
            <person name="Habermann K."/>
            <person name="Parnell L."/>
            <person name="Dedhia N."/>
            <person name="Gnoj L."/>
            <person name="Schutz K."/>
            <person name="Huang E."/>
            <person name="Spiegel L."/>
            <person name="Sekhon M."/>
            <person name="Murray J."/>
            <person name="Sheet P."/>
            <person name="Cordes M."/>
            <person name="Abu-Threideh J."/>
            <person name="Stoneking T."/>
            <person name="Kalicki J."/>
            <person name="Graves T."/>
            <person name="Harmon G."/>
            <person name="Edwards J."/>
            <person name="Latreille P."/>
            <person name="Courtney L."/>
            <person name="Cloud J."/>
            <person name="Abbott A."/>
            <person name="Scott K."/>
            <person name="Johnson D."/>
            <person name="Minx P."/>
            <person name="Bentley D."/>
            <person name="Fulton B."/>
            <person name="Miller N."/>
            <person name="Greco T."/>
            <person name="Kemp K."/>
            <person name="Kramer J."/>
            <person name="Fulton L."/>
            <person name="Mardis E."/>
            <person name="Dante M."/>
            <person name="Pepin K."/>
            <person name="Hillier L.W."/>
            <person name="Nelson J."/>
            <person name="Spieth J."/>
            <person name="Ryan E."/>
            <person name="Andrews S."/>
            <person name="Geisel C."/>
            <person name="Layman D."/>
            <person name="Du H."/>
            <person name="Ali J."/>
            <person name="Berghoff A."/>
            <person name="Jones K."/>
            <person name="Drone K."/>
            <person name="Cotton M."/>
            <person name="Joshu C."/>
            <person name="Antonoiu B."/>
            <person name="Zidanic M."/>
            <person name="Strong C."/>
            <person name="Sun H."/>
            <person name="Lamar B."/>
            <person name="Yordan C."/>
            <person name="Ma P."/>
            <person name="Zhong J."/>
            <person name="Preston R."/>
            <person name="Vil D."/>
            <person name="Shekher M."/>
            <person name="Matero A."/>
            <person name="Shah R."/>
            <person name="Swaby I.K."/>
            <person name="O'Shaughnessy A."/>
            <person name="Rodriguez M."/>
            <person name="Hoffman J."/>
            <person name="Till S."/>
            <person name="Granat S."/>
            <person name="Shohdy N."/>
            <person name="Hasegawa A."/>
            <person name="Hameed A."/>
            <person name="Lodhi M."/>
            <person name="Johnson A."/>
            <person name="Chen E."/>
            <person name="Marra M.A."/>
            <person name="Martienssen R."/>
            <person name="McCombie W.R."/>
        </authorList>
    </citation>
    <scope>NUCLEOTIDE SEQUENCE [LARGE SCALE GENOMIC DNA]</scope>
    <source>
        <strain>cv. Columbia</strain>
    </source>
</reference>
<reference key="3">
    <citation type="journal article" date="2017" name="Plant J.">
        <title>Araport11: a complete reannotation of the Arabidopsis thaliana reference genome.</title>
        <authorList>
            <person name="Cheng C.Y."/>
            <person name="Krishnakumar V."/>
            <person name="Chan A.P."/>
            <person name="Thibaud-Nissen F."/>
            <person name="Schobel S."/>
            <person name="Town C.D."/>
        </authorList>
    </citation>
    <scope>GENOME REANNOTATION</scope>
    <source>
        <strain>cv. Columbia</strain>
    </source>
</reference>
<reference key="4">
    <citation type="journal article" date="2003" name="Science">
        <title>Empirical analysis of transcriptional activity in the Arabidopsis genome.</title>
        <authorList>
            <person name="Yamada K."/>
            <person name="Lim J."/>
            <person name="Dale J.M."/>
            <person name="Chen H."/>
            <person name="Shinn P."/>
            <person name="Palm C.J."/>
            <person name="Southwick A.M."/>
            <person name="Wu H.C."/>
            <person name="Kim C.J."/>
            <person name="Nguyen M."/>
            <person name="Pham P.K."/>
            <person name="Cheuk R.F."/>
            <person name="Karlin-Newmann G."/>
            <person name="Liu S.X."/>
            <person name="Lam B."/>
            <person name="Sakano H."/>
            <person name="Wu T."/>
            <person name="Yu G."/>
            <person name="Miranda M."/>
            <person name="Quach H.L."/>
            <person name="Tripp M."/>
            <person name="Chang C.H."/>
            <person name="Lee J.M."/>
            <person name="Toriumi M.J."/>
            <person name="Chan M.M."/>
            <person name="Tang C.C."/>
            <person name="Onodera C.S."/>
            <person name="Deng J.M."/>
            <person name="Akiyama K."/>
            <person name="Ansari Y."/>
            <person name="Arakawa T."/>
            <person name="Banh J."/>
            <person name="Banno F."/>
            <person name="Bowser L."/>
            <person name="Brooks S.Y."/>
            <person name="Carninci P."/>
            <person name="Chao Q."/>
            <person name="Choy N."/>
            <person name="Enju A."/>
            <person name="Goldsmith A.D."/>
            <person name="Gurjal M."/>
            <person name="Hansen N.F."/>
            <person name="Hayashizaki Y."/>
            <person name="Johnson-Hopson C."/>
            <person name="Hsuan V.W."/>
            <person name="Iida K."/>
            <person name="Karnes M."/>
            <person name="Khan S."/>
            <person name="Koesema E."/>
            <person name="Ishida J."/>
            <person name="Jiang P.X."/>
            <person name="Jones T."/>
            <person name="Kawai J."/>
            <person name="Kamiya A."/>
            <person name="Meyers C."/>
            <person name="Nakajima M."/>
            <person name="Narusaka M."/>
            <person name="Seki M."/>
            <person name="Sakurai T."/>
            <person name="Satou M."/>
            <person name="Tamse R."/>
            <person name="Vaysberg M."/>
            <person name="Wallender E.K."/>
            <person name="Wong C."/>
            <person name="Yamamura Y."/>
            <person name="Yuan S."/>
            <person name="Shinozaki K."/>
            <person name="Davis R.W."/>
            <person name="Theologis A."/>
            <person name="Ecker J.R."/>
        </authorList>
    </citation>
    <scope>NUCLEOTIDE SEQUENCE [LARGE SCALE MRNA]</scope>
    <source>
        <strain>cv. Columbia</strain>
    </source>
</reference>
<reference key="5">
    <citation type="submission" date="2002-03" db="EMBL/GenBank/DDBJ databases">
        <title>Full-length cDNA from Arabidopsis thaliana.</title>
        <authorList>
            <person name="Brover V.V."/>
            <person name="Troukhan M.E."/>
            <person name="Alexandrov N.A."/>
            <person name="Lu Y.-P."/>
            <person name="Flavell R.B."/>
            <person name="Feldmann K.A."/>
        </authorList>
    </citation>
    <scope>NUCLEOTIDE SEQUENCE [LARGE SCALE MRNA]</scope>
</reference>
<reference key="6">
    <citation type="journal article" date="2000" name="Plant Physiol.">
        <title>Differential regulation of plastidial and cytosolic isoforms of peptide methionine sulfoxide reductase in Arabidopsis.</title>
        <authorList>
            <person name="Sadanandom A."/>
            <person name="Poghosyan Z."/>
            <person name="Fairbairn D.J."/>
            <person name="Murphy D.J."/>
        </authorList>
    </citation>
    <scope>FUNCTION</scope>
    <scope>CATALYTIC ACTIVITY</scope>
    <scope>BIOPHYSICOCHEMICAL PROPERTIES</scope>
    <scope>TISSUE SPECIFICITY</scope>
    <scope>INDUCTION</scope>
    <source>
        <strain>cv. Columbia</strain>
    </source>
</reference>
<reference key="7">
    <citation type="journal article" date="2002" name="Plant J.">
        <title>A peptide methionine sulfoxide reductase highly expressed in photosynthetic tissue in Arabidopsis thaliana can protect the chaperone-like activity of a chloroplast-localized small heat shock protein.</title>
        <authorList>
            <person name="Gustavsson N."/>
            <person name="Kokke B.P."/>
            <person name="Haerndahl U."/>
            <person name="Silow M."/>
            <person name="Bechtold U."/>
            <person name="Poghosyan Z."/>
            <person name="Murphy D."/>
            <person name="Boelens W.C."/>
            <person name="Sundby C."/>
        </authorList>
    </citation>
    <scope>FUNCTION</scope>
</reference>
<reference key="8">
    <citation type="journal article" date="2006" name="Photosyn. Res.">
        <title>Plant methionine sulfoxide reductase A and B multigenic families.</title>
        <authorList>
            <person name="Rouhier N."/>
            <person name="Vieira Dos Santos C."/>
            <person name="Tarrago L."/>
            <person name="Rey P."/>
        </authorList>
    </citation>
    <scope>GENE FAMILY</scope>
    <scope>NOMENCLATURE</scope>
</reference>
<reference key="9">
    <citation type="journal article" date="2012" name="Mol. Cell. Proteomics">
        <title>Comparative large-scale characterisation of plant vs. mammal proteins reveals similar and idiosyncratic N-alpha acetylation features.</title>
        <authorList>
            <person name="Bienvenut W.V."/>
            <person name="Sumpton D."/>
            <person name="Martinez A."/>
            <person name="Lilla S."/>
            <person name="Espagne C."/>
            <person name="Meinnel T."/>
            <person name="Giglione C."/>
        </authorList>
    </citation>
    <scope>ACETYLATION [LARGE SCALE ANALYSIS] AT MET-54</scope>
    <scope>CLEAVAGE OF TRANSIT PEPTIDE [LARGE SCALE ANALYSIS] AFTER PRO-53</scope>
    <scope>IDENTIFICATION BY MASS SPECTROMETRY [LARGE SCALE ANALYSIS]</scope>
</reference>